<dbReference type="EC" id="1.17.1.8" evidence="1"/>
<dbReference type="EMBL" id="AE017143">
    <property type="protein sequence ID" value="AAP96209.1"/>
    <property type="molecule type" value="Genomic_DNA"/>
</dbReference>
<dbReference type="SMR" id="Q7VLM6"/>
<dbReference type="STRING" id="233412.HD_1398"/>
<dbReference type="KEGG" id="hdu:HD_1398"/>
<dbReference type="eggNOG" id="COG0289">
    <property type="taxonomic scope" value="Bacteria"/>
</dbReference>
<dbReference type="HOGENOM" id="CLU_047479_2_1_6"/>
<dbReference type="UniPathway" id="UPA00034">
    <property type="reaction ID" value="UER00018"/>
</dbReference>
<dbReference type="Proteomes" id="UP000001022">
    <property type="component" value="Chromosome"/>
</dbReference>
<dbReference type="GO" id="GO:0005829">
    <property type="term" value="C:cytosol"/>
    <property type="evidence" value="ECO:0007669"/>
    <property type="project" value="TreeGrafter"/>
</dbReference>
<dbReference type="GO" id="GO:0008839">
    <property type="term" value="F:4-hydroxy-tetrahydrodipicolinate reductase"/>
    <property type="evidence" value="ECO:0007669"/>
    <property type="project" value="UniProtKB-EC"/>
</dbReference>
<dbReference type="GO" id="GO:0051287">
    <property type="term" value="F:NAD binding"/>
    <property type="evidence" value="ECO:0007669"/>
    <property type="project" value="UniProtKB-UniRule"/>
</dbReference>
<dbReference type="GO" id="GO:0050661">
    <property type="term" value="F:NADP binding"/>
    <property type="evidence" value="ECO:0007669"/>
    <property type="project" value="UniProtKB-UniRule"/>
</dbReference>
<dbReference type="GO" id="GO:0016726">
    <property type="term" value="F:oxidoreductase activity, acting on CH or CH2 groups, NAD or NADP as acceptor"/>
    <property type="evidence" value="ECO:0007669"/>
    <property type="project" value="UniProtKB-UniRule"/>
</dbReference>
<dbReference type="GO" id="GO:0019877">
    <property type="term" value="P:diaminopimelate biosynthetic process"/>
    <property type="evidence" value="ECO:0007669"/>
    <property type="project" value="UniProtKB-UniRule"/>
</dbReference>
<dbReference type="GO" id="GO:0009089">
    <property type="term" value="P:lysine biosynthetic process via diaminopimelate"/>
    <property type="evidence" value="ECO:0007669"/>
    <property type="project" value="UniProtKB-UniRule"/>
</dbReference>
<dbReference type="CDD" id="cd02274">
    <property type="entry name" value="DHDPR_N"/>
    <property type="match status" value="1"/>
</dbReference>
<dbReference type="FunFam" id="3.30.360.10:FF:000004">
    <property type="entry name" value="4-hydroxy-tetrahydrodipicolinate reductase"/>
    <property type="match status" value="1"/>
</dbReference>
<dbReference type="FunFam" id="3.40.50.720:FF:000048">
    <property type="entry name" value="4-hydroxy-tetrahydrodipicolinate reductase"/>
    <property type="match status" value="1"/>
</dbReference>
<dbReference type="Gene3D" id="3.30.360.10">
    <property type="entry name" value="Dihydrodipicolinate Reductase, domain 2"/>
    <property type="match status" value="1"/>
</dbReference>
<dbReference type="Gene3D" id="3.40.50.720">
    <property type="entry name" value="NAD(P)-binding Rossmann-like Domain"/>
    <property type="match status" value="1"/>
</dbReference>
<dbReference type="HAMAP" id="MF_00102">
    <property type="entry name" value="DapB"/>
    <property type="match status" value="1"/>
</dbReference>
<dbReference type="InterPro" id="IPR022663">
    <property type="entry name" value="DapB_C"/>
</dbReference>
<dbReference type="InterPro" id="IPR000846">
    <property type="entry name" value="DapB_N"/>
</dbReference>
<dbReference type="InterPro" id="IPR022664">
    <property type="entry name" value="DapB_N_CS"/>
</dbReference>
<dbReference type="InterPro" id="IPR023940">
    <property type="entry name" value="DHDPR_bac"/>
</dbReference>
<dbReference type="InterPro" id="IPR036291">
    <property type="entry name" value="NAD(P)-bd_dom_sf"/>
</dbReference>
<dbReference type="NCBIfam" id="TIGR00036">
    <property type="entry name" value="dapB"/>
    <property type="match status" value="1"/>
</dbReference>
<dbReference type="PANTHER" id="PTHR20836:SF0">
    <property type="entry name" value="4-HYDROXY-TETRAHYDRODIPICOLINATE REDUCTASE 1, CHLOROPLASTIC-RELATED"/>
    <property type="match status" value="1"/>
</dbReference>
<dbReference type="PANTHER" id="PTHR20836">
    <property type="entry name" value="DIHYDRODIPICOLINATE REDUCTASE"/>
    <property type="match status" value="1"/>
</dbReference>
<dbReference type="Pfam" id="PF05173">
    <property type="entry name" value="DapB_C"/>
    <property type="match status" value="1"/>
</dbReference>
<dbReference type="Pfam" id="PF01113">
    <property type="entry name" value="DapB_N"/>
    <property type="match status" value="1"/>
</dbReference>
<dbReference type="PIRSF" id="PIRSF000161">
    <property type="entry name" value="DHPR"/>
    <property type="match status" value="1"/>
</dbReference>
<dbReference type="SUPFAM" id="SSF55347">
    <property type="entry name" value="Glyceraldehyde-3-phosphate dehydrogenase-like, C-terminal domain"/>
    <property type="match status" value="1"/>
</dbReference>
<dbReference type="SUPFAM" id="SSF51735">
    <property type="entry name" value="NAD(P)-binding Rossmann-fold domains"/>
    <property type="match status" value="1"/>
</dbReference>
<dbReference type="PROSITE" id="PS01298">
    <property type="entry name" value="DAPB"/>
    <property type="match status" value="1"/>
</dbReference>
<feature type="chain" id="PRO_0000141442" description="4-hydroxy-tetrahydrodipicolinate reductase">
    <location>
        <begin position="1"/>
        <end position="269"/>
    </location>
</feature>
<feature type="active site" description="Proton donor/acceptor" evidence="1">
    <location>
        <position position="155"/>
    </location>
</feature>
<feature type="active site" description="Proton donor" evidence="1">
    <location>
        <position position="159"/>
    </location>
</feature>
<feature type="binding site" evidence="1">
    <location>
        <begin position="8"/>
        <end position="13"/>
    </location>
    <ligand>
        <name>NAD(+)</name>
        <dbReference type="ChEBI" id="CHEBI:57540"/>
    </ligand>
</feature>
<feature type="binding site" evidence="1">
    <location>
        <position position="34"/>
    </location>
    <ligand>
        <name>NAD(+)</name>
        <dbReference type="ChEBI" id="CHEBI:57540"/>
    </ligand>
</feature>
<feature type="binding site" evidence="1">
    <location>
        <position position="35"/>
    </location>
    <ligand>
        <name>NADP(+)</name>
        <dbReference type="ChEBI" id="CHEBI:58349"/>
    </ligand>
</feature>
<feature type="binding site" evidence="1">
    <location>
        <begin position="98"/>
        <end position="100"/>
    </location>
    <ligand>
        <name>NAD(+)</name>
        <dbReference type="ChEBI" id="CHEBI:57540"/>
    </ligand>
</feature>
<feature type="binding site" evidence="1">
    <location>
        <begin position="122"/>
        <end position="125"/>
    </location>
    <ligand>
        <name>NAD(+)</name>
        <dbReference type="ChEBI" id="CHEBI:57540"/>
    </ligand>
</feature>
<feature type="binding site" evidence="1">
    <location>
        <position position="156"/>
    </location>
    <ligand>
        <name>(S)-2,3,4,5-tetrahydrodipicolinate</name>
        <dbReference type="ChEBI" id="CHEBI:16845"/>
    </ligand>
</feature>
<feature type="binding site" evidence="1">
    <location>
        <begin position="165"/>
        <end position="166"/>
    </location>
    <ligand>
        <name>(S)-2,3,4,5-tetrahydrodipicolinate</name>
        <dbReference type="ChEBI" id="CHEBI:16845"/>
    </ligand>
</feature>
<protein>
    <recommendedName>
        <fullName evidence="1">4-hydroxy-tetrahydrodipicolinate reductase</fullName>
        <shortName evidence="1">HTPA reductase</shortName>
        <ecNumber evidence="1">1.17.1.8</ecNumber>
    </recommendedName>
</protein>
<proteinExistence type="inferred from homology"/>
<organism>
    <name type="scientific">Haemophilus ducreyi (strain 35000HP / ATCC 700724)</name>
    <dbReference type="NCBI Taxonomy" id="233412"/>
    <lineage>
        <taxon>Bacteria</taxon>
        <taxon>Pseudomonadati</taxon>
        <taxon>Pseudomonadota</taxon>
        <taxon>Gammaproteobacteria</taxon>
        <taxon>Pasteurellales</taxon>
        <taxon>Pasteurellaceae</taxon>
        <taxon>Haemophilus</taxon>
    </lineage>
</organism>
<reference key="1">
    <citation type="submission" date="2003-06" db="EMBL/GenBank/DDBJ databases">
        <title>The complete genome sequence of Haemophilus ducreyi.</title>
        <authorList>
            <person name="Munson R.S. Jr."/>
            <person name="Ray W.C."/>
            <person name="Mahairas G."/>
            <person name="Sabo P."/>
            <person name="Mungur R."/>
            <person name="Johnson L."/>
            <person name="Nguyen D."/>
            <person name="Wang J."/>
            <person name="Forst C."/>
            <person name="Hood L."/>
        </authorList>
    </citation>
    <scope>NUCLEOTIDE SEQUENCE [LARGE SCALE GENOMIC DNA]</scope>
    <source>
        <strain>35000HP / ATCC 700724</strain>
    </source>
</reference>
<name>DAPB_HAEDU</name>
<keyword id="KW-0028">Amino-acid biosynthesis</keyword>
<keyword id="KW-0963">Cytoplasm</keyword>
<keyword id="KW-0220">Diaminopimelate biosynthesis</keyword>
<keyword id="KW-0457">Lysine biosynthesis</keyword>
<keyword id="KW-0520">NAD</keyword>
<keyword id="KW-0521">NADP</keyword>
<keyword id="KW-0560">Oxidoreductase</keyword>
<keyword id="KW-1185">Reference proteome</keyword>
<sequence>MLRIAIVGAGGRMGRNLIQAVQQTEGLSLMAAFEREGSSLIGTDVGELVGISPLGITISACLAEKTADFDVLIDFTRPEATLEYLKFCLANDKKIVIGTTGFDENGKQAIKQASQKIAIVFASNYSVGVNLVFKLLEKAAKVMGNYCDIEIIEAHHKHKVDAPSGTALSMGEHIAKTLGRDLKTDAVFERYGIMDERQTNQIGFATIRAGDIVGEHSVWFVDEGERVEISHKATSRMTFAKGAVCAAQWLANQPQGLFDMTNVLALDQL</sequence>
<evidence type="ECO:0000255" key="1">
    <source>
        <dbReference type="HAMAP-Rule" id="MF_00102"/>
    </source>
</evidence>
<evidence type="ECO:0000305" key="2"/>
<accession>Q7VLM6</accession>
<gene>
    <name evidence="1" type="primary">dapB</name>
    <name type="ordered locus">HD_1398</name>
</gene>
<comment type="function">
    <text evidence="1">Catalyzes the conversion of 4-hydroxy-tetrahydrodipicolinate (HTPA) to tetrahydrodipicolinate.</text>
</comment>
<comment type="catalytic activity">
    <reaction evidence="1">
        <text>(S)-2,3,4,5-tetrahydrodipicolinate + NAD(+) + H2O = (2S,4S)-4-hydroxy-2,3,4,5-tetrahydrodipicolinate + NADH + H(+)</text>
        <dbReference type="Rhea" id="RHEA:35323"/>
        <dbReference type="ChEBI" id="CHEBI:15377"/>
        <dbReference type="ChEBI" id="CHEBI:15378"/>
        <dbReference type="ChEBI" id="CHEBI:16845"/>
        <dbReference type="ChEBI" id="CHEBI:57540"/>
        <dbReference type="ChEBI" id="CHEBI:57945"/>
        <dbReference type="ChEBI" id="CHEBI:67139"/>
        <dbReference type="EC" id="1.17.1.8"/>
    </reaction>
</comment>
<comment type="catalytic activity">
    <reaction evidence="1">
        <text>(S)-2,3,4,5-tetrahydrodipicolinate + NADP(+) + H2O = (2S,4S)-4-hydroxy-2,3,4,5-tetrahydrodipicolinate + NADPH + H(+)</text>
        <dbReference type="Rhea" id="RHEA:35331"/>
        <dbReference type="ChEBI" id="CHEBI:15377"/>
        <dbReference type="ChEBI" id="CHEBI:15378"/>
        <dbReference type="ChEBI" id="CHEBI:16845"/>
        <dbReference type="ChEBI" id="CHEBI:57783"/>
        <dbReference type="ChEBI" id="CHEBI:58349"/>
        <dbReference type="ChEBI" id="CHEBI:67139"/>
        <dbReference type="EC" id="1.17.1.8"/>
    </reaction>
</comment>
<comment type="pathway">
    <text evidence="1">Amino-acid biosynthesis; L-lysine biosynthesis via DAP pathway; (S)-tetrahydrodipicolinate from L-aspartate: step 4/4.</text>
</comment>
<comment type="subcellular location">
    <subcellularLocation>
        <location evidence="1">Cytoplasm</location>
    </subcellularLocation>
</comment>
<comment type="similarity">
    <text evidence="1">Belongs to the DapB family.</text>
</comment>
<comment type="caution">
    <text evidence="2">Was originally thought to be a dihydrodipicolinate reductase (DHDPR), catalyzing the conversion of dihydrodipicolinate to tetrahydrodipicolinate. However, it was shown in E.coli that the substrate of the enzymatic reaction is not dihydrodipicolinate (DHDP) but in fact (2S,4S)-4-hydroxy-2,3,4,5-tetrahydrodipicolinic acid (HTPA), the product released by the DapA-catalyzed reaction.</text>
</comment>